<evidence type="ECO:0000255" key="1">
    <source>
        <dbReference type="HAMAP-Rule" id="MF_00550"/>
    </source>
</evidence>
<gene>
    <name evidence="1" type="primary">pepT</name>
    <name type="ordered locus">PBPRA1848</name>
</gene>
<feature type="chain" id="PRO_0000185308" description="Peptidase T">
    <location>
        <begin position="1"/>
        <end position="409"/>
    </location>
</feature>
<feature type="active site" evidence="1">
    <location>
        <position position="80"/>
    </location>
</feature>
<feature type="active site" description="Proton acceptor" evidence="1">
    <location>
        <position position="174"/>
    </location>
</feature>
<feature type="binding site" evidence="1">
    <location>
        <position position="78"/>
    </location>
    <ligand>
        <name>Zn(2+)</name>
        <dbReference type="ChEBI" id="CHEBI:29105"/>
        <label>1</label>
    </ligand>
</feature>
<feature type="binding site" evidence="1">
    <location>
        <position position="140"/>
    </location>
    <ligand>
        <name>Zn(2+)</name>
        <dbReference type="ChEBI" id="CHEBI:29105"/>
        <label>1</label>
    </ligand>
</feature>
<feature type="binding site" evidence="1">
    <location>
        <position position="140"/>
    </location>
    <ligand>
        <name>Zn(2+)</name>
        <dbReference type="ChEBI" id="CHEBI:29105"/>
        <label>2</label>
    </ligand>
</feature>
<feature type="binding site" evidence="1">
    <location>
        <position position="175"/>
    </location>
    <ligand>
        <name>Zn(2+)</name>
        <dbReference type="ChEBI" id="CHEBI:29105"/>
        <label>2</label>
    </ligand>
</feature>
<feature type="binding site" evidence="1">
    <location>
        <position position="197"/>
    </location>
    <ligand>
        <name>Zn(2+)</name>
        <dbReference type="ChEBI" id="CHEBI:29105"/>
        <label>1</label>
    </ligand>
</feature>
<feature type="binding site" evidence="1">
    <location>
        <position position="379"/>
    </location>
    <ligand>
        <name>Zn(2+)</name>
        <dbReference type="ChEBI" id="CHEBI:29105"/>
        <label>2</label>
    </ligand>
</feature>
<organism>
    <name type="scientific">Photobacterium profundum (strain SS9)</name>
    <dbReference type="NCBI Taxonomy" id="298386"/>
    <lineage>
        <taxon>Bacteria</taxon>
        <taxon>Pseudomonadati</taxon>
        <taxon>Pseudomonadota</taxon>
        <taxon>Gammaproteobacteria</taxon>
        <taxon>Vibrionales</taxon>
        <taxon>Vibrionaceae</taxon>
        <taxon>Photobacterium</taxon>
    </lineage>
</organism>
<protein>
    <recommendedName>
        <fullName evidence="1">Peptidase T</fullName>
        <ecNumber evidence="1">3.4.11.4</ecNumber>
    </recommendedName>
    <alternativeName>
        <fullName evidence="1">Aminotripeptidase</fullName>
        <shortName evidence="1">Tripeptidase</shortName>
    </alternativeName>
    <alternativeName>
        <fullName evidence="1">Tripeptide aminopeptidase</fullName>
    </alternativeName>
</protein>
<comment type="function">
    <text evidence="1">Cleaves the N-terminal amino acid of tripeptides.</text>
</comment>
<comment type="catalytic activity">
    <reaction evidence="1">
        <text>Release of the N-terminal residue from a tripeptide.</text>
        <dbReference type="EC" id="3.4.11.4"/>
    </reaction>
</comment>
<comment type="cofactor">
    <cofactor evidence="1">
        <name>Zn(2+)</name>
        <dbReference type="ChEBI" id="CHEBI:29105"/>
    </cofactor>
    <text evidence="1">Binds 2 Zn(2+) ions per subunit.</text>
</comment>
<comment type="subcellular location">
    <subcellularLocation>
        <location evidence="1">Cytoplasm</location>
    </subcellularLocation>
</comment>
<comment type="similarity">
    <text evidence="1">Belongs to the peptidase M20B family.</text>
</comment>
<keyword id="KW-0031">Aminopeptidase</keyword>
<keyword id="KW-0963">Cytoplasm</keyword>
<keyword id="KW-0378">Hydrolase</keyword>
<keyword id="KW-0479">Metal-binding</keyword>
<keyword id="KW-0482">Metalloprotease</keyword>
<keyword id="KW-0645">Protease</keyword>
<keyword id="KW-1185">Reference proteome</keyword>
<keyword id="KW-0862">Zinc</keyword>
<proteinExistence type="inferred from homology"/>
<reference key="1">
    <citation type="journal article" date="2005" name="Science">
        <title>Life at depth: Photobacterium profundum genome sequence and expression analysis.</title>
        <authorList>
            <person name="Vezzi A."/>
            <person name="Campanaro S."/>
            <person name="D'Angelo M."/>
            <person name="Simonato F."/>
            <person name="Vitulo N."/>
            <person name="Lauro F.M."/>
            <person name="Cestaro A."/>
            <person name="Malacrida G."/>
            <person name="Simionati B."/>
            <person name="Cannata N."/>
            <person name="Romualdi C."/>
            <person name="Bartlett D.H."/>
            <person name="Valle G."/>
        </authorList>
    </citation>
    <scope>NUCLEOTIDE SEQUENCE [LARGE SCALE GENOMIC DNA]</scope>
    <source>
        <strain>ATCC BAA-1253 / SS9</strain>
    </source>
</reference>
<dbReference type="EC" id="3.4.11.4" evidence="1"/>
<dbReference type="EMBL" id="CR378669">
    <property type="protein sequence ID" value="CAG20252.1"/>
    <property type="molecule type" value="Genomic_DNA"/>
</dbReference>
<dbReference type="RefSeq" id="WP_011218558.1">
    <property type="nucleotide sequence ID" value="NC_006370.1"/>
</dbReference>
<dbReference type="SMR" id="Q6LR24"/>
<dbReference type="STRING" id="298386.PBPRA1848"/>
<dbReference type="MEROPS" id="M20.003"/>
<dbReference type="KEGG" id="ppr:PBPRA1848"/>
<dbReference type="eggNOG" id="COG2195">
    <property type="taxonomic scope" value="Bacteria"/>
</dbReference>
<dbReference type="HOGENOM" id="CLU_053676_0_0_6"/>
<dbReference type="Proteomes" id="UP000000593">
    <property type="component" value="Chromosome 1"/>
</dbReference>
<dbReference type="GO" id="GO:0005829">
    <property type="term" value="C:cytosol"/>
    <property type="evidence" value="ECO:0007669"/>
    <property type="project" value="TreeGrafter"/>
</dbReference>
<dbReference type="GO" id="GO:0008237">
    <property type="term" value="F:metallopeptidase activity"/>
    <property type="evidence" value="ECO:0007669"/>
    <property type="project" value="UniProtKB-KW"/>
</dbReference>
<dbReference type="GO" id="GO:0045148">
    <property type="term" value="F:tripeptide aminopeptidase activity"/>
    <property type="evidence" value="ECO:0007669"/>
    <property type="project" value="UniProtKB-UniRule"/>
</dbReference>
<dbReference type="GO" id="GO:0008270">
    <property type="term" value="F:zinc ion binding"/>
    <property type="evidence" value="ECO:0007669"/>
    <property type="project" value="UniProtKB-UniRule"/>
</dbReference>
<dbReference type="GO" id="GO:0043171">
    <property type="term" value="P:peptide catabolic process"/>
    <property type="evidence" value="ECO:0007669"/>
    <property type="project" value="UniProtKB-UniRule"/>
</dbReference>
<dbReference type="GO" id="GO:0006508">
    <property type="term" value="P:proteolysis"/>
    <property type="evidence" value="ECO:0007669"/>
    <property type="project" value="UniProtKB-UniRule"/>
</dbReference>
<dbReference type="CDD" id="cd03892">
    <property type="entry name" value="M20_peptT"/>
    <property type="match status" value="1"/>
</dbReference>
<dbReference type="Gene3D" id="3.30.70.360">
    <property type="match status" value="1"/>
</dbReference>
<dbReference type="Gene3D" id="3.40.630.10">
    <property type="entry name" value="Zn peptidases"/>
    <property type="match status" value="1"/>
</dbReference>
<dbReference type="HAMAP" id="MF_00550">
    <property type="entry name" value="Aminopeptidase_M20"/>
    <property type="match status" value="1"/>
</dbReference>
<dbReference type="InterPro" id="IPR001261">
    <property type="entry name" value="ArgE/DapE_CS"/>
</dbReference>
<dbReference type="InterPro" id="IPR036264">
    <property type="entry name" value="Bact_exopeptidase_dim_dom"/>
</dbReference>
<dbReference type="InterPro" id="IPR002933">
    <property type="entry name" value="Peptidase_M20"/>
</dbReference>
<dbReference type="InterPro" id="IPR011650">
    <property type="entry name" value="Peptidase_M20_dimer"/>
</dbReference>
<dbReference type="InterPro" id="IPR010161">
    <property type="entry name" value="Peptidase_M20B"/>
</dbReference>
<dbReference type="NCBIfam" id="TIGR01882">
    <property type="entry name" value="peptidase-T"/>
    <property type="match status" value="1"/>
</dbReference>
<dbReference type="NCBIfam" id="NF003976">
    <property type="entry name" value="PRK05469.1"/>
    <property type="match status" value="1"/>
</dbReference>
<dbReference type="NCBIfam" id="NF009920">
    <property type="entry name" value="PRK13381.1"/>
    <property type="match status" value="1"/>
</dbReference>
<dbReference type="PANTHER" id="PTHR42994">
    <property type="entry name" value="PEPTIDASE T"/>
    <property type="match status" value="1"/>
</dbReference>
<dbReference type="PANTHER" id="PTHR42994:SF1">
    <property type="entry name" value="PEPTIDASE T"/>
    <property type="match status" value="1"/>
</dbReference>
<dbReference type="Pfam" id="PF07687">
    <property type="entry name" value="M20_dimer"/>
    <property type="match status" value="1"/>
</dbReference>
<dbReference type="Pfam" id="PF01546">
    <property type="entry name" value="Peptidase_M20"/>
    <property type="match status" value="1"/>
</dbReference>
<dbReference type="PIRSF" id="PIRSF037215">
    <property type="entry name" value="Peptidase_M20B"/>
    <property type="match status" value="1"/>
</dbReference>
<dbReference type="SUPFAM" id="SSF55031">
    <property type="entry name" value="Bacterial exopeptidase dimerisation domain"/>
    <property type="match status" value="1"/>
</dbReference>
<dbReference type="SUPFAM" id="SSF53187">
    <property type="entry name" value="Zn-dependent exopeptidases"/>
    <property type="match status" value="1"/>
</dbReference>
<dbReference type="PROSITE" id="PS00758">
    <property type="entry name" value="ARGE_DAPE_CPG2_1"/>
    <property type="match status" value="1"/>
</dbReference>
<dbReference type="PROSITE" id="PS00759">
    <property type="entry name" value="ARGE_DAPE_CPG2_2"/>
    <property type="match status" value="1"/>
</dbReference>
<name>PEPT_PHOPR</name>
<sequence length="409" mass="45201">MDNLVERFLRYVSFETQSNSSVTQCPSTSGQIVLAEQLKNELIELELVDVELDENGYVMARLPSNVEHDVPAIGLIAHMDTAPDASGKDVVPQIVENYQGGDIALGIGDEVLSPIQYPDLRKLLGHNIITTDGTTLLGADNKAGIAEIITAIAHLKANPDIKHGDICIGFTPDEEIGRGANLFNVEKFGAKWAYTIDGGPVGELEFENFNATSADVICHGVNVHPGTAKNKMINSMNIAAQFQLMMPTEETPECTEHYEGFYHLKSMEPSVAKTELGYIIRDFDRKGLEQRKVFMQSKVDELNSSLTKGRVELILTDCYFNMREMVEPHQHIIELAKEAMIACDVKPDIKPIRGGTDGARLSFMGLPCPNIFTGGYNFHGIHEFITIEGMEQAVRVIVKLAEKTSEKYQ</sequence>
<accession>Q6LR24</accession>